<reference key="1">
    <citation type="submission" date="2007-08" db="EMBL/GenBank/DDBJ databases">
        <title>Complete sequence of Shewanella sediminis HAW-EB3.</title>
        <authorList>
            <consortium name="US DOE Joint Genome Institute"/>
            <person name="Copeland A."/>
            <person name="Lucas S."/>
            <person name="Lapidus A."/>
            <person name="Barry K."/>
            <person name="Glavina del Rio T."/>
            <person name="Dalin E."/>
            <person name="Tice H."/>
            <person name="Pitluck S."/>
            <person name="Chertkov O."/>
            <person name="Brettin T."/>
            <person name="Bruce D."/>
            <person name="Detter J.C."/>
            <person name="Han C."/>
            <person name="Schmutz J."/>
            <person name="Larimer F."/>
            <person name="Land M."/>
            <person name="Hauser L."/>
            <person name="Kyrpides N."/>
            <person name="Kim E."/>
            <person name="Zhao J.-S."/>
            <person name="Richardson P."/>
        </authorList>
    </citation>
    <scope>NUCLEOTIDE SEQUENCE [LARGE SCALE GENOMIC DNA]</scope>
    <source>
        <strain>HAW-EB3</strain>
    </source>
</reference>
<dbReference type="EMBL" id="CP000821">
    <property type="protein sequence ID" value="ABV39089.1"/>
    <property type="molecule type" value="Genomic_DNA"/>
</dbReference>
<dbReference type="RefSeq" id="WP_012144816.1">
    <property type="nucleotide sequence ID" value="NC_009831.1"/>
</dbReference>
<dbReference type="SMR" id="A8G1W6"/>
<dbReference type="STRING" id="425104.Ssed_4487"/>
<dbReference type="KEGG" id="sse:Ssed_4487"/>
<dbReference type="eggNOG" id="COG0224">
    <property type="taxonomic scope" value="Bacteria"/>
</dbReference>
<dbReference type="HOGENOM" id="CLU_050669_0_1_6"/>
<dbReference type="OrthoDB" id="9812769at2"/>
<dbReference type="Proteomes" id="UP000002015">
    <property type="component" value="Chromosome"/>
</dbReference>
<dbReference type="GO" id="GO:0005886">
    <property type="term" value="C:plasma membrane"/>
    <property type="evidence" value="ECO:0007669"/>
    <property type="project" value="UniProtKB-SubCell"/>
</dbReference>
<dbReference type="GO" id="GO:0045259">
    <property type="term" value="C:proton-transporting ATP synthase complex"/>
    <property type="evidence" value="ECO:0007669"/>
    <property type="project" value="UniProtKB-KW"/>
</dbReference>
<dbReference type="GO" id="GO:0005524">
    <property type="term" value="F:ATP binding"/>
    <property type="evidence" value="ECO:0007669"/>
    <property type="project" value="UniProtKB-UniRule"/>
</dbReference>
<dbReference type="GO" id="GO:0046933">
    <property type="term" value="F:proton-transporting ATP synthase activity, rotational mechanism"/>
    <property type="evidence" value="ECO:0007669"/>
    <property type="project" value="UniProtKB-UniRule"/>
</dbReference>
<dbReference type="GO" id="GO:0042777">
    <property type="term" value="P:proton motive force-driven plasma membrane ATP synthesis"/>
    <property type="evidence" value="ECO:0007669"/>
    <property type="project" value="UniProtKB-UniRule"/>
</dbReference>
<dbReference type="CDD" id="cd12151">
    <property type="entry name" value="F1-ATPase_gamma"/>
    <property type="match status" value="1"/>
</dbReference>
<dbReference type="FunFam" id="1.10.287.80:FF:000005">
    <property type="entry name" value="ATP synthase gamma chain"/>
    <property type="match status" value="2"/>
</dbReference>
<dbReference type="FunFam" id="3.40.1380.10:FF:000001">
    <property type="entry name" value="ATP synthase gamma chain"/>
    <property type="match status" value="1"/>
</dbReference>
<dbReference type="Gene3D" id="3.40.1380.10">
    <property type="match status" value="1"/>
</dbReference>
<dbReference type="Gene3D" id="1.10.287.80">
    <property type="entry name" value="ATP synthase, gamma subunit, helix hairpin domain"/>
    <property type="match status" value="1"/>
</dbReference>
<dbReference type="HAMAP" id="MF_00815">
    <property type="entry name" value="ATP_synth_gamma_bact"/>
    <property type="match status" value="1"/>
</dbReference>
<dbReference type="InterPro" id="IPR035968">
    <property type="entry name" value="ATP_synth_F1_ATPase_gsu"/>
</dbReference>
<dbReference type="InterPro" id="IPR000131">
    <property type="entry name" value="ATP_synth_F1_gsu"/>
</dbReference>
<dbReference type="InterPro" id="IPR023632">
    <property type="entry name" value="ATP_synth_F1_gsu_CS"/>
</dbReference>
<dbReference type="NCBIfam" id="TIGR01146">
    <property type="entry name" value="ATPsyn_F1gamma"/>
    <property type="match status" value="1"/>
</dbReference>
<dbReference type="NCBIfam" id="NF004144">
    <property type="entry name" value="PRK05621.1-1"/>
    <property type="match status" value="1"/>
</dbReference>
<dbReference type="PANTHER" id="PTHR11693">
    <property type="entry name" value="ATP SYNTHASE GAMMA CHAIN"/>
    <property type="match status" value="1"/>
</dbReference>
<dbReference type="PANTHER" id="PTHR11693:SF22">
    <property type="entry name" value="ATP SYNTHASE SUBUNIT GAMMA, MITOCHONDRIAL"/>
    <property type="match status" value="1"/>
</dbReference>
<dbReference type="Pfam" id="PF00231">
    <property type="entry name" value="ATP-synt"/>
    <property type="match status" value="1"/>
</dbReference>
<dbReference type="PRINTS" id="PR00126">
    <property type="entry name" value="ATPASEGAMMA"/>
</dbReference>
<dbReference type="SUPFAM" id="SSF52943">
    <property type="entry name" value="ATP synthase (F1-ATPase), gamma subunit"/>
    <property type="match status" value="1"/>
</dbReference>
<dbReference type="PROSITE" id="PS00153">
    <property type="entry name" value="ATPASE_GAMMA"/>
    <property type="match status" value="1"/>
</dbReference>
<gene>
    <name evidence="1" type="primary">atpG</name>
    <name type="ordered locus">Ssed_4487</name>
</gene>
<keyword id="KW-0066">ATP synthesis</keyword>
<keyword id="KW-0997">Cell inner membrane</keyword>
<keyword id="KW-1003">Cell membrane</keyword>
<keyword id="KW-0139">CF(1)</keyword>
<keyword id="KW-0375">Hydrogen ion transport</keyword>
<keyword id="KW-0406">Ion transport</keyword>
<keyword id="KW-0472">Membrane</keyword>
<keyword id="KW-1185">Reference proteome</keyword>
<keyword id="KW-0813">Transport</keyword>
<evidence type="ECO:0000255" key="1">
    <source>
        <dbReference type="HAMAP-Rule" id="MF_00815"/>
    </source>
</evidence>
<comment type="function">
    <text evidence="1">Produces ATP from ADP in the presence of a proton gradient across the membrane. The gamma chain is believed to be important in regulating ATPase activity and the flow of protons through the CF(0) complex.</text>
</comment>
<comment type="subunit">
    <text evidence="1">F-type ATPases have 2 components, CF(1) - the catalytic core - and CF(0) - the membrane proton channel. CF(1) has five subunits: alpha(3), beta(3), gamma(1), delta(1), epsilon(1). CF(0) has three main subunits: a, b and c.</text>
</comment>
<comment type="subcellular location">
    <subcellularLocation>
        <location evidence="1">Cell inner membrane</location>
        <topology evidence="1">Peripheral membrane protein</topology>
    </subcellularLocation>
</comment>
<comment type="similarity">
    <text evidence="1">Belongs to the ATPase gamma chain family.</text>
</comment>
<proteinExistence type="inferred from homology"/>
<name>ATPG_SHESH</name>
<accession>A8G1W6</accession>
<protein>
    <recommendedName>
        <fullName evidence="1">ATP synthase gamma chain</fullName>
    </recommendedName>
    <alternativeName>
        <fullName evidence="1">ATP synthase F1 sector gamma subunit</fullName>
    </alternativeName>
    <alternativeName>
        <fullName evidence="1">F-ATPase gamma subunit</fullName>
    </alternativeName>
</protein>
<feature type="chain" id="PRO_1000083811" description="ATP synthase gamma chain">
    <location>
        <begin position="1"/>
        <end position="286"/>
    </location>
</feature>
<sequence>MANAKEIKTKIASVKNTQKITSAMEMVAASKMRKAQDRMAASRPYAENMRKVIGHVAQGSLEYKHPYLEVREAKRVGYIVVSTDRGLCGGLNVNLFKKVVADVKSQREQGVEVEFCPIGARSVQFFNSFGGQVSAYASGLGDAPKLADLIGTVRVMLQAYNEGKLDRLYVVFNRFVNTMSQTPVIEQLLPLPKSEVDEVSHHWDYLYEPDPKELLETLLVRYVESQVYQGVVENLASEQAARMVAMKSATDNAGDLISDLQLVYNKARQAAITQELSEIVAGAAAV</sequence>
<organism>
    <name type="scientific">Shewanella sediminis (strain HAW-EB3)</name>
    <dbReference type="NCBI Taxonomy" id="425104"/>
    <lineage>
        <taxon>Bacteria</taxon>
        <taxon>Pseudomonadati</taxon>
        <taxon>Pseudomonadota</taxon>
        <taxon>Gammaproteobacteria</taxon>
        <taxon>Alteromonadales</taxon>
        <taxon>Shewanellaceae</taxon>
        <taxon>Shewanella</taxon>
    </lineage>
</organism>